<feature type="chain" id="PRO_0000084257" description="IMP-specific 5'-nucleotidase 1">
    <location>
        <begin position="1"/>
        <end position="450"/>
    </location>
</feature>
<feature type="active site" description="Nucleophile" evidence="1">
    <location>
        <position position="172"/>
    </location>
</feature>
<feature type="active site" description="Proton donor" evidence="1">
    <location>
        <position position="174"/>
    </location>
</feature>
<feature type="binding site" evidence="1">
    <location>
        <position position="144"/>
    </location>
    <ligand>
        <name>ATP</name>
        <dbReference type="ChEBI" id="CHEBI:30616"/>
        <note>allosteric activator</note>
    </ligand>
</feature>
<feature type="binding site" evidence="1">
    <location>
        <position position="172"/>
    </location>
    <ligand>
        <name>IMP</name>
        <dbReference type="ChEBI" id="CHEBI:58053"/>
    </ligand>
</feature>
<feature type="binding site" evidence="1">
    <location>
        <position position="172"/>
    </location>
    <ligand>
        <name>Mg(2+)</name>
        <dbReference type="ChEBI" id="CHEBI:18420"/>
    </ligand>
</feature>
<feature type="binding site" evidence="1">
    <location>
        <position position="174"/>
    </location>
    <ligand>
        <name>IMP</name>
        <dbReference type="ChEBI" id="CHEBI:58053"/>
    </ligand>
</feature>
<feature type="binding site" evidence="1">
    <location>
        <position position="174"/>
    </location>
    <ligand>
        <name>Mg(2+)</name>
        <dbReference type="ChEBI" id="CHEBI:18420"/>
    </ligand>
</feature>
<feature type="binding site" evidence="1">
    <location>
        <position position="180"/>
    </location>
    <ligand>
        <name>IMP</name>
        <dbReference type="ChEBI" id="CHEBI:58053"/>
    </ligand>
</feature>
<feature type="binding site" evidence="1">
    <location>
        <position position="208"/>
    </location>
    <ligand>
        <name>IMP</name>
        <dbReference type="ChEBI" id="CHEBI:58053"/>
    </ligand>
</feature>
<feature type="binding site" evidence="1">
    <location>
        <position position="376"/>
    </location>
    <ligand>
        <name>IMP</name>
        <dbReference type="ChEBI" id="CHEBI:58053"/>
    </ligand>
</feature>
<feature type="binding site" evidence="1">
    <location>
        <position position="384"/>
    </location>
    <ligand>
        <name>IMP</name>
        <dbReference type="ChEBI" id="CHEBI:58053"/>
    </ligand>
</feature>
<feature type="binding site" evidence="1">
    <location>
        <position position="411"/>
    </location>
    <ligand>
        <name>Mg(2+)</name>
        <dbReference type="ChEBI" id="CHEBI:18420"/>
    </ligand>
</feature>
<feature type="strand" evidence="7">
    <location>
        <begin position="8"/>
        <end position="12"/>
    </location>
</feature>
<feature type="helix" evidence="8">
    <location>
        <begin position="18"/>
        <end position="34"/>
    </location>
</feature>
<feature type="helix" evidence="8">
    <location>
        <begin position="36"/>
        <end position="38"/>
    </location>
</feature>
<feature type="helix" evidence="8">
    <location>
        <begin position="45"/>
        <end position="76"/>
    </location>
</feature>
<feature type="helix" evidence="8">
    <location>
        <begin position="99"/>
        <end position="103"/>
    </location>
</feature>
<feature type="helix" evidence="8">
    <location>
        <begin position="116"/>
        <end position="127"/>
    </location>
</feature>
<feature type="helix" evidence="8">
    <location>
        <begin position="129"/>
        <end position="131"/>
    </location>
</feature>
<feature type="strand" evidence="8">
    <location>
        <begin position="133"/>
        <end position="135"/>
    </location>
</feature>
<feature type="helix" evidence="8">
    <location>
        <begin position="139"/>
        <end position="159"/>
    </location>
</feature>
<feature type="strand" evidence="7">
    <location>
        <begin position="161"/>
        <end position="163"/>
    </location>
</feature>
<feature type="strand" evidence="8">
    <location>
        <begin position="168"/>
        <end position="171"/>
    </location>
</feature>
<feature type="turn" evidence="8">
    <location>
        <begin position="175"/>
        <end position="177"/>
    </location>
</feature>
<feature type="helix" evidence="8">
    <location>
        <begin position="191"/>
        <end position="199"/>
    </location>
</feature>
<feature type="strand" evidence="8">
    <location>
        <begin position="203"/>
        <end position="207"/>
    </location>
</feature>
<feature type="helix" evidence="8">
    <location>
        <begin position="215"/>
        <end position="221"/>
    </location>
</feature>
<feature type="helix" evidence="8">
    <location>
        <begin position="223"/>
        <end position="231"/>
    </location>
</feature>
<feature type="strand" evidence="8">
    <location>
        <begin position="233"/>
        <end position="235"/>
    </location>
</feature>
<feature type="helix" evidence="8">
    <location>
        <begin position="237"/>
        <end position="240"/>
    </location>
</feature>
<feature type="strand" evidence="8">
    <location>
        <begin position="243"/>
        <end position="247"/>
    </location>
</feature>
<feature type="turn" evidence="8">
    <location>
        <begin position="248"/>
        <end position="251"/>
    </location>
</feature>
<feature type="strand" evidence="8">
    <location>
        <begin position="252"/>
        <end position="259"/>
    </location>
</feature>
<feature type="turn" evidence="8">
    <location>
        <begin position="260"/>
        <end position="263"/>
    </location>
</feature>
<feature type="strand" evidence="8">
    <location>
        <begin position="264"/>
        <end position="269"/>
    </location>
</feature>
<feature type="helix" evidence="8">
    <location>
        <begin position="272"/>
        <end position="274"/>
    </location>
</feature>
<feature type="helix" evidence="8">
    <location>
        <begin position="278"/>
        <end position="281"/>
    </location>
</feature>
<feature type="helix" evidence="8">
    <location>
        <begin position="285"/>
        <end position="305"/>
    </location>
</feature>
<feature type="strand" evidence="8">
    <location>
        <begin position="313"/>
        <end position="316"/>
    </location>
</feature>
<feature type="strand" evidence="8">
    <location>
        <begin position="318"/>
        <end position="324"/>
    </location>
</feature>
<feature type="strand" evidence="8">
    <location>
        <begin position="326"/>
        <end position="329"/>
    </location>
</feature>
<feature type="strand" evidence="8">
    <location>
        <begin position="335"/>
        <end position="339"/>
    </location>
</feature>
<feature type="helix" evidence="8">
    <location>
        <begin position="343"/>
        <end position="358"/>
    </location>
</feature>
<feature type="helix" evidence="8">
    <location>
        <begin position="361"/>
        <end position="364"/>
    </location>
</feature>
<feature type="strand" evidence="8">
    <location>
        <begin position="368"/>
        <end position="372"/>
    </location>
</feature>
<feature type="strand" evidence="7">
    <location>
        <begin position="373"/>
        <end position="375"/>
    </location>
</feature>
<feature type="strand" evidence="8">
    <location>
        <begin position="377"/>
        <end position="382"/>
    </location>
</feature>
<feature type="helix" evidence="8">
    <location>
        <begin position="384"/>
        <end position="394"/>
    </location>
</feature>
<feature type="strand" evidence="7">
    <location>
        <begin position="397"/>
        <end position="399"/>
    </location>
</feature>
<feature type="helix" evidence="8">
    <location>
        <begin position="403"/>
        <end position="405"/>
    </location>
</feature>
<feature type="strand" evidence="8">
    <location>
        <begin position="406"/>
        <end position="411"/>
    </location>
</feature>
<feature type="strand" evidence="8">
    <location>
        <begin position="414"/>
        <end position="418"/>
    </location>
</feature>
<feature type="helix" evidence="8">
    <location>
        <begin position="422"/>
        <end position="426"/>
    </location>
</feature>
<feature type="strand" evidence="8">
    <location>
        <begin position="428"/>
        <end position="432"/>
    </location>
</feature>
<feature type="helix" evidence="8">
    <location>
        <begin position="436"/>
        <end position="447"/>
    </location>
</feature>
<protein>
    <recommendedName>
        <fullName evidence="5">IMP-specific 5'-nucleotidase 1</fullName>
        <ecNumber evidence="2 4">3.1.3.99</ecNumber>
    </recommendedName>
</protein>
<dbReference type="EC" id="3.1.3.99" evidence="2 4"/>
<dbReference type="EMBL" id="U55020">
    <property type="protein sequence ID" value="AAC49641.1"/>
    <property type="molecule type" value="Genomic_DNA"/>
</dbReference>
<dbReference type="EMBL" id="Z75063">
    <property type="protein sequence ID" value="CAA99361.1"/>
    <property type="molecule type" value="Genomic_DNA"/>
</dbReference>
<dbReference type="EMBL" id="BK006948">
    <property type="protein sequence ID" value="DAA10928.1"/>
    <property type="molecule type" value="Genomic_DNA"/>
</dbReference>
<dbReference type="PIR" id="S67043">
    <property type="entry name" value="S67043"/>
</dbReference>
<dbReference type="RefSeq" id="NP_014798.3">
    <property type="nucleotide sequence ID" value="NM_001183574.3"/>
</dbReference>
<dbReference type="PDB" id="8J6H">
    <property type="method" value="X-ray"/>
    <property type="resolution" value="2.44 A"/>
    <property type="chains" value="A/B/C/D=4-450"/>
</dbReference>
<dbReference type="PDB" id="8JB3">
    <property type="method" value="X-ray"/>
    <property type="resolution" value="1.77 A"/>
    <property type="chains" value="A=4-450"/>
</dbReference>
<dbReference type="PDBsum" id="8J6H"/>
<dbReference type="PDBsum" id="8JB3"/>
<dbReference type="SMR" id="Q99312"/>
<dbReference type="BioGRID" id="34551">
    <property type="interactions" value="53"/>
</dbReference>
<dbReference type="DIP" id="DIP-4027N"/>
<dbReference type="FunCoup" id="Q99312">
    <property type="interactions" value="124"/>
</dbReference>
<dbReference type="IntAct" id="Q99312">
    <property type="interactions" value="4"/>
</dbReference>
<dbReference type="MINT" id="Q99312"/>
<dbReference type="STRING" id="4932.YOR155C"/>
<dbReference type="iPTMnet" id="Q99312"/>
<dbReference type="PaxDb" id="4932-YOR155C"/>
<dbReference type="PeptideAtlas" id="Q99312"/>
<dbReference type="EnsemblFungi" id="YOR155C_mRNA">
    <property type="protein sequence ID" value="YOR155C"/>
    <property type="gene ID" value="YOR155C"/>
</dbReference>
<dbReference type="GeneID" id="854326"/>
<dbReference type="KEGG" id="sce:YOR155C"/>
<dbReference type="AGR" id="SGD:S000005681"/>
<dbReference type="SGD" id="S000005681">
    <property type="gene designation" value="ISN1"/>
</dbReference>
<dbReference type="VEuPathDB" id="FungiDB:YOR155C"/>
<dbReference type="eggNOG" id="ENOG502QR24">
    <property type="taxonomic scope" value="Eukaryota"/>
</dbReference>
<dbReference type="HOGENOM" id="CLU_031816_1_0_1"/>
<dbReference type="InParanoid" id="Q99312"/>
<dbReference type="OMA" id="WGVLACQ"/>
<dbReference type="OrthoDB" id="185373at2759"/>
<dbReference type="BioCyc" id="MetaCyc:MONOMER3O-10"/>
<dbReference type="BioCyc" id="YEAST:MONOMER3O-10"/>
<dbReference type="BRENDA" id="3.1.3.99">
    <property type="organism ID" value="984"/>
</dbReference>
<dbReference type="BioGRID-ORCS" id="854326">
    <property type="hits" value="2 hits in 10 CRISPR screens"/>
</dbReference>
<dbReference type="PRO" id="PR:Q99312"/>
<dbReference type="Proteomes" id="UP000002311">
    <property type="component" value="Chromosome XV"/>
</dbReference>
<dbReference type="RNAct" id="Q99312">
    <property type="molecule type" value="protein"/>
</dbReference>
<dbReference type="GO" id="GO:0005524">
    <property type="term" value="F:ATP binding"/>
    <property type="evidence" value="ECO:0007669"/>
    <property type="project" value="UniProtKB-KW"/>
</dbReference>
<dbReference type="GO" id="GO:0050483">
    <property type="term" value="F:IMP 5'-nucleotidase activity"/>
    <property type="evidence" value="ECO:0000314"/>
    <property type="project" value="SGD"/>
</dbReference>
<dbReference type="GO" id="GO:0000287">
    <property type="term" value="F:magnesium ion binding"/>
    <property type="evidence" value="ECO:0007669"/>
    <property type="project" value="InterPro"/>
</dbReference>
<dbReference type="GO" id="GO:0006190">
    <property type="term" value="P:inosine salvage"/>
    <property type="evidence" value="ECO:0000315"/>
    <property type="project" value="SGD"/>
</dbReference>
<dbReference type="GO" id="GO:0071590">
    <property type="term" value="P:nicotinamide riboside biosynthetic process"/>
    <property type="evidence" value="ECO:0000315"/>
    <property type="project" value="SGD"/>
</dbReference>
<dbReference type="GO" id="GO:0071592">
    <property type="term" value="P:nicotinic acid riboside biosynthetic process"/>
    <property type="evidence" value="ECO:0000315"/>
    <property type="project" value="SGD"/>
</dbReference>
<dbReference type="GO" id="GO:0009117">
    <property type="term" value="P:nucleotide metabolic process"/>
    <property type="evidence" value="ECO:0007669"/>
    <property type="project" value="UniProtKB-KW"/>
</dbReference>
<dbReference type="InterPro" id="IPR036412">
    <property type="entry name" value="HAD-like_sf"/>
</dbReference>
<dbReference type="InterPro" id="IPR009453">
    <property type="entry name" value="ISN1"/>
</dbReference>
<dbReference type="PANTHER" id="PTHR28213">
    <property type="entry name" value="IMP-SPECIFIC 5'-NUCLEOTIDASE 1"/>
    <property type="match status" value="1"/>
</dbReference>
<dbReference type="PANTHER" id="PTHR28213:SF1">
    <property type="entry name" value="IMP-SPECIFIC 5'-NUCLEOTIDASE 1"/>
    <property type="match status" value="1"/>
</dbReference>
<dbReference type="Pfam" id="PF06437">
    <property type="entry name" value="ISN1"/>
    <property type="match status" value="1"/>
</dbReference>
<dbReference type="PIRSF" id="PIRSF028836">
    <property type="entry name" value="ISN1"/>
    <property type="match status" value="1"/>
</dbReference>
<dbReference type="SUPFAM" id="SSF56784">
    <property type="entry name" value="HAD-like"/>
    <property type="match status" value="1"/>
</dbReference>
<organism>
    <name type="scientific">Saccharomyces cerevisiae (strain ATCC 204508 / S288c)</name>
    <name type="common">Baker's yeast</name>
    <dbReference type="NCBI Taxonomy" id="559292"/>
    <lineage>
        <taxon>Eukaryota</taxon>
        <taxon>Fungi</taxon>
        <taxon>Dikarya</taxon>
        <taxon>Ascomycota</taxon>
        <taxon>Saccharomycotina</taxon>
        <taxon>Saccharomycetes</taxon>
        <taxon>Saccharomycetales</taxon>
        <taxon>Saccharomycetaceae</taxon>
        <taxon>Saccharomyces</taxon>
    </lineage>
</organism>
<name>ISN1_YEAST</name>
<accession>Q99312</accession>
<accession>D6W2L2</accession>
<proteinExistence type="evidence at protein level"/>
<evidence type="ECO:0000250" key="1">
    <source>
        <dbReference type="UniProtKB" id="A0A144A134"/>
    </source>
</evidence>
<evidence type="ECO:0000269" key="2">
    <source>
    </source>
</evidence>
<evidence type="ECO:0000269" key="3">
    <source>
    </source>
</evidence>
<evidence type="ECO:0000269" key="4">
    <source>
    </source>
</evidence>
<evidence type="ECO:0000303" key="5">
    <source>
    </source>
</evidence>
<evidence type="ECO:0000305" key="6"/>
<evidence type="ECO:0007829" key="7">
    <source>
        <dbReference type="PDB" id="8J6H"/>
    </source>
</evidence>
<evidence type="ECO:0007829" key="8">
    <source>
        <dbReference type="PDB" id="8JB3"/>
    </source>
</evidence>
<sequence length="450" mass="51330">MSSRYRVEYHLKSHRKDEFIDWVKGLLASPFVLHAVSHEGDYNDDLATTQRVRSQYADIFKDIEGLIKDKIEFDSRNMSQDEIEDGASSQSLNILGQSRLNLLVPSIGTFFTELPLEQAFLWEDSQRAISARRMVAPSFNDIRHILNTAQIFHFKKQENLHNGKVLRLVTFDGDVTLYEDGGSLVYTNPVIPYILKLLRCGINVGIVTAAGYDEAGTYENRLKGLIVALHDSTDIPVSQKQNLTIMGGESSYLFRYYEDPEEDNFGFRQIDKEEWLLPRMKAWSLEDVEKTLDFAERTLNRLRKRLNLPSEISIIRKVRAVGIVPGERYDEASKRQVPVKLDREQLEEIVLTLQNTLESFAPSRRIQFSCFDGGSDVWCDIGGKDLGVRSLQQFYNPESPIQPSETLHVGDQFAPVGSANDFKARLAGCTLWIASPQETVNYLHRLLETD</sequence>
<keyword id="KW-0002">3D-structure</keyword>
<keyword id="KW-0067">ATP-binding</keyword>
<keyword id="KW-0378">Hydrolase</keyword>
<keyword id="KW-0460">Magnesium</keyword>
<keyword id="KW-0479">Metal-binding</keyword>
<keyword id="KW-0546">Nucleotide metabolism</keyword>
<keyword id="KW-0547">Nucleotide-binding</keyword>
<keyword id="KW-1185">Reference proteome</keyword>
<gene>
    <name type="primary">ISN1</name>
    <name type="ordered locus">YOR155C</name>
    <name type="ORF">O3548</name>
</gene>
<reference key="1">
    <citation type="journal article" date="1997" name="Yeast">
        <title>Analysis of a 35.6 kb region on the right arm of Saccharomyces cerevisiae chromosome XV.</title>
        <authorList>
            <person name="Bordonne R."/>
            <person name="Camasses A."/>
            <person name="Madania A."/>
            <person name="Poch O."/>
            <person name="Tarassov I.A."/>
            <person name="Winsor B."/>
            <person name="Martin R.P."/>
        </authorList>
    </citation>
    <scope>NUCLEOTIDE SEQUENCE [GENOMIC DNA]</scope>
    <source>
        <strain>S288c / FY1678</strain>
    </source>
</reference>
<reference key="2">
    <citation type="journal article" date="1997" name="Nature">
        <title>The nucleotide sequence of Saccharomyces cerevisiae chromosome XV.</title>
        <authorList>
            <person name="Dujon B."/>
            <person name="Albermann K."/>
            <person name="Aldea M."/>
            <person name="Alexandraki D."/>
            <person name="Ansorge W."/>
            <person name="Arino J."/>
            <person name="Benes V."/>
            <person name="Bohn C."/>
            <person name="Bolotin-Fukuhara M."/>
            <person name="Bordonne R."/>
            <person name="Boyer J."/>
            <person name="Camasses A."/>
            <person name="Casamayor A."/>
            <person name="Casas C."/>
            <person name="Cheret G."/>
            <person name="Cziepluch C."/>
            <person name="Daignan-Fornier B."/>
            <person name="Dang V.-D."/>
            <person name="de Haan M."/>
            <person name="Delius H."/>
            <person name="Durand P."/>
            <person name="Fairhead C."/>
            <person name="Feldmann H."/>
            <person name="Gaillon L."/>
            <person name="Galisson F."/>
            <person name="Gamo F.-J."/>
            <person name="Gancedo C."/>
            <person name="Goffeau A."/>
            <person name="Goulding S.E."/>
            <person name="Grivell L.A."/>
            <person name="Habbig B."/>
            <person name="Hand N.J."/>
            <person name="Hani J."/>
            <person name="Hattenhorst U."/>
            <person name="Hebling U."/>
            <person name="Hernando Y."/>
            <person name="Herrero E."/>
            <person name="Heumann K."/>
            <person name="Hiesel R."/>
            <person name="Hilger F."/>
            <person name="Hofmann B."/>
            <person name="Hollenberg C.P."/>
            <person name="Hughes B."/>
            <person name="Jauniaux J.-C."/>
            <person name="Kalogeropoulos A."/>
            <person name="Katsoulou C."/>
            <person name="Kordes E."/>
            <person name="Lafuente M.J."/>
            <person name="Landt O."/>
            <person name="Louis E.J."/>
            <person name="Maarse A.C."/>
            <person name="Madania A."/>
            <person name="Mannhaupt G."/>
            <person name="Marck C."/>
            <person name="Martin R.P."/>
            <person name="Mewes H.-W."/>
            <person name="Michaux G."/>
            <person name="Paces V."/>
            <person name="Parle-McDermott A.G."/>
            <person name="Pearson B.M."/>
            <person name="Perrin A."/>
            <person name="Pettersson B."/>
            <person name="Poch O."/>
            <person name="Pohl T.M."/>
            <person name="Poirey R."/>
            <person name="Portetelle D."/>
            <person name="Pujol A."/>
            <person name="Purnelle B."/>
            <person name="Ramezani Rad M."/>
            <person name="Rechmann S."/>
            <person name="Schwager C."/>
            <person name="Schweizer M."/>
            <person name="Sor F."/>
            <person name="Sterky F."/>
            <person name="Tarassov I.A."/>
            <person name="Teodoru C."/>
            <person name="Tettelin H."/>
            <person name="Thierry A."/>
            <person name="Tobiasch E."/>
            <person name="Tzermia M."/>
            <person name="Uhlen M."/>
            <person name="Unseld M."/>
            <person name="Valens M."/>
            <person name="Vandenbol M."/>
            <person name="Vetter I."/>
            <person name="Vlcek C."/>
            <person name="Voet M."/>
            <person name="Volckaert G."/>
            <person name="Voss H."/>
            <person name="Wambutt R."/>
            <person name="Wedler H."/>
            <person name="Wiemann S."/>
            <person name="Winsor B."/>
            <person name="Wolfe K.H."/>
            <person name="Zollner A."/>
            <person name="Zumstein E."/>
            <person name="Kleine K."/>
        </authorList>
    </citation>
    <scope>NUCLEOTIDE SEQUENCE [LARGE SCALE GENOMIC DNA]</scope>
    <source>
        <strain>ATCC 204508 / S288c</strain>
    </source>
</reference>
<reference key="3">
    <citation type="journal article" date="2014" name="G3 (Bethesda)">
        <title>The reference genome sequence of Saccharomyces cerevisiae: Then and now.</title>
        <authorList>
            <person name="Engel S.R."/>
            <person name="Dietrich F.S."/>
            <person name="Fisk D.G."/>
            <person name="Binkley G."/>
            <person name="Balakrishnan R."/>
            <person name="Costanzo M.C."/>
            <person name="Dwight S.S."/>
            <person name="Hitz B.C."/>
            <person name="Karra K."/>
            <person name="Nash R.S."/>
            <person name="Weng S."/>
            <person name="Wong E.D."/>
            <person name="Lloyd P."/>
            <person name="Skrzypek M.S."/>
            <person name="Miyasato S.R."/>
            <person name="Simison M."/>
            <person name="Cherry J.M."/>
        </authorList>
    </citation>
    <scope>GENOME REANNOTATION</scope>
    <source>
        <strain>ATCC 204508 / S288c</strain>
    </source>
</reference>
<reference key="4">
    <citation type="journal article" date="1994" name="Biochem. J.">
        <title>Purification and some properties of an IMP-specific 5'-nucleotidase from yeast.</title>
        <authorList>
            <person name="Itoh R."/>
        </authorList>
    </citation>
    <scope>FUNCTION</scope>
    <scope>CATALYTIC ACTIVITY</scope>
    <scope>ACTIVITY REGULATION</scope>
    <scope>BIOPHYSICOCHEMICAL PROPERTIES</scope>
    <scope>SUBUNIT</scope>
    <scope>COFACTOR</scope>
    <scope>SUBSTRATE SPECIFICITY</scope>
</reference>
<reference key="5">
    <citation type="journal article" date="2003" name="BMC Biochem.">
        <title>The yeast ISN1 (YOR155c) gene encodes a new type of IMP-specific 5'-nucleotidase.</title>
        <authorList>
            <person name="Itoh R."/>
            <person name="Saint-Marc C."/>
            <person name="Chaignepain S."/>
            <person name="Katahira R."/>
            <person name="Schmitter J.-M."/>
            <person name="Daignan-Fornier B."/>
        </authorList>
    </citation>
    <scope>FUNCTION</scope>
    <scope>CATALYTIC ACTIVITY</scope>
    <scope>IDENTIFICATION BY MASS SPECTROMETRY</scope>
    <scope>DOMAIN</scope>
</reference>
<reference key="6">
    <citation type="journal article" date="2003" name="Nature">
        <title>Global analysis of protein expression in yeast.</title>
        <authorList>
            <person name="Ghaemmaghami S."/>
            <person name="Huh W.-K."/>
            <person name="Bower K."/>
            <person name="Howson R.W."/>
            <person name="Belle A."/>
            <person name="Dephoure N."/>
            <person name="O'Shea E.K."/>
            <person name="Weissman J.S."/>
        </authorList>
    </citation>
    <scope>LEVEL OF PROTEIN EXPRESSION [LARGE SCALE ANALYSIS]</scope>
</reference>
<reference key="7">
    <citation type="journal article" date="2008" name="Mol. Cell. Proteomics">
        <title>A multidimensional chromatography technology for in-depth phosphoproteome analysis.</title>
        <authorList>
            <person name="Albuquerque C.P."/>
            <person name="Smolka M.B."/>
            <person name="Payne S.H."/>
            <person name="Bafna V."/>
            <person name="Eng J."/>
            <person name="Zhou H."/>
        </authorList>
    </citation>
    <scope>IDENTIFICATION BY MASS SPECTROMETRY [LARGE SCALE ANALYSIS]</scope>
</reference>
<reference key="8">
    <citation type="journal article" date="2009" name="Science">
        <title>Global analysis of Cdk1 substrate phosphorylation sites provides insights into evolution.</title>
        <authorList>
            <person name="Holt L.J."/>
            <person name="Tuch B.B."/>
            <person name="Villen J."/>
            <person name="Johnson A.D."/>
            <person name="Gygi S.P."/>
            <person name="Morgan D.O."/>
        </authorList>
    </citation>
    <scope>IDENTIFICATION BY MASS SPECTROMETRY [LARGE SCALE ANALYSIS]</scope>
</reference>
<comment type="function">
    <text evidence="2 4">IMP-specific 5'-nucleotidase involved in IMP (inosine 5'-phosphate) degradation.</text>
</comment>
<comment type="catalytic activity">
    <reaction evidence="2 4">
        <text>IMP + H2O = inosine + phosphate</text>
        <dbReference type="Rhea" id="RHEA:27718"/>
        <dbReference type="ChEBI" id="CHEBI:15377"/>
        <dbReference type="ChEBI" id="CHEBI:17596"/>
        <dbReference type="ChEBI" id="CHEBI:43474"/>
        <dbReference type="ChEBI" id="CHEBI:58053"/>
        <dbReference type="EC" id="3.1.3.99"/>
    </reaction>
</comment>
<comment type="cofactor">
    <cofactor evidence="4">
        <name>Mg(2+)</name>
        <dbReference type="ChEBI" id="CHEBI:18420"/>
    </cofactor>
</comment>
<comment type="activity regulation">
    <text evidence="1 4">Allosterically activated by ATP (PubMed:8141771). ATP binding is a prerequisite to magnesium and substrate binding (By similarity). ATP binds to 2 of the subunits in the homotetramer inducing a closure of these 2 subunits and the release of the C-terminal loop, thereby activating the enzyme (By similarity).</text>
</comment>
<comment type="biophysicochemical properties">
    <phDependence>
        <text evidence="4">Optimum pH is 6-6.5.</text>
    </phDependence>
</comment>
<comment type="subunit">
    <text evidence="4">Homotetramer.</text>
</comment>
<comment type="miscellaneous">
    <text evidence="3">Present with 1590 molecules/cell in log phase SD medium.</text>
</comment>
<comment type="similarity">
    <text evidence="6">Belongs to the ISN1 family.</text>
</comment>